<sequence length="402" mass="43942">MSSSSFSIENVRSQFPALEKRQIFGDNAGGSQVLGTVAKRQLSPITEYLIETNVQLGASYKTSTQSTAIFDNAYKAAAKYINAGIDEIVIGASTTQVFRNLAAALKLQPGDELILTNVDHESNIDPWLHYAALNNATIKWWTPSDLNNPKLDPEQLRSLLTNKTRLVACTHCSNILGTINNIKAIADVVHEIPGALLAVDGVAYAPHRAIDVKELGADFYAFSWYKVYGPHISLLYGSKAAQAQLSSLGHFFNPDGSLMDKLELAAASYELTQAIIPLTAYFGENPKQTWDAIAEHEQKLQTRLIEYLVSKPQITVYGETSTDKAVRVPTVSFTVEGMSSQSVVEAVEAVSHAGIRWGHFFSKRLVGSILGLSDDGVVRVSLVHYNTVEEVDQIIVALEMVL</sequence>
<keyword id="KW-0663">Pyridoxal phosphate</keyword>
<keyword id="KW-1185">Reference proteome</keyword>
<keyword id="KW-0808">Transferase</keyword>
<organism>
    <name type="scientific">Gibberella zeae (strain ATCC MYA-4620 / CBS 123657 / FGSC 9075 / NRRL 31084 / PH-1)</name>
    <name type="common">Wheat head blight fungus</name>
    <name type="synonym">Fusarium graminearum</name>
    <dbReference type="NCBI Taxonomy" id="229533"/>
    <lineage>
        <taxon>Eukaryota</taxon>
        <taxon>Fungi</taxon>
        <taxon>Dikarya</taxon>
        <taxon>Ascomycota</taxon>
        <taxon>Pezizomycotina</taxon>
        <taxon>Sordariomycetes</taxon>
        <taxon>Hypocreomycetidae</taxon>
        <taxon>Hypocreales</taxon>
        <taxon>Nectriaceae</taxon>
        <taxon>Fusarium</taxon>
    </lineage>
</organism>
<evidence type="ECO:0000250" key="1">
    <source>
        <dbReference type="UniProtKB" id="Q96255"/>
    </source>
</evidence>
<evidence type="ECO:0000269" key="2">
    <source>
    </source>
</evidence>
<evidence type="ECO:0000269" key="3">
    <source>
    </source>
</evidence>
<evidence type="ECO:0000269" key="4">
    <source>
    </source>
</evidence>
<evidence type="ECO:0000269" key="5">
    <source>
    </source>
</evidence>
<evidence type="ECO:0000303" key="6">
    <source>
    </source>
</evidence>
<evidence type="ECO:0000303" key="7">
    <source>
    </source>
</evidence>
<evidence type="ECO:0000305" key="8"/>
<evidence type="ECO:0000305" key="9">
    <source>
    </source>
</evidence>
<proteinExistence type="evidence at transcript level"/>
<protein>
    <recommendedName>
        <fullName evidence="7">Aminotransferase-like protein FGM3</fullName>
        <ecNumber evidence="9">2.-.-.-</ecNumber>
    </recommendedName>
    <alternativeName>
        <fullName evidence="6">C64 cluster protein NRPS5</fullName>
    </alternativeName>
    <alternativeName>
        <fullName evidence="7">Fg3_54 cluster protein FGM3</fullName>
    </alternativeName>
    <alternativeName>
        <fullName evidence="7">Fusaoctaxin A biosynthesis cluster protein FGM3</fullName>
    </alternativeName>
</protein>
<name>FGM3_GIBZE</name>
<comment type="function">
    <text evidence="4 5 9">Aminotransferase-like protein; part of the Fg3_54/C64 gene cluster that mediates the biosynthesis of the octapeptide fusaoctaxin A, a virulence factor that is required for cell-to-cell invasiveness of plant host (PubMed:30804501). The 2 nonribosomal peptide synthetases NRPS9 and NRPS5 form an assembly line which likely utilizes GABA as a starter unit (loaded on the unique module M1 of NRPS9) and sequentially incorporates seven extender units composed of the residues L-Ala, L-allo-Ile, L-Ser, L-Val, L-Ser, L-Leu and L-Leu, respectively (PubMed:30804501, PubMed:31100892). During the process, each of the residues that are tethered on modules M3-M7 of NRPS5 containing an E domain can undergo an epimerization reaction to produce a D-configuration before the transpeptidation reaction occurs (PubMed:30804501, PubMed:31100892). The elongation of the peptidyl chain might be terminated by module M8-mediated L-Leu incorporation, followed by R domain-catalyzed 4 electron reduction to release the resulting octapeptide from the assembly line as an alcohol (PubMed:30804501, PubMed:31100892). Fusaoctaxin A is cleaved by the cluster specific ABC transporter FGM5 to the pentapeptide fusapentaxin A and the tripeptide fusatrixin A (PubMed:31100892). The other enzymes from the cluster, FGM1, FGM2, FGM3 and FGM9 seem not to be involved in the biosynthesis of fusaoctaxin A and their functions have still to be determined (Probable).</text>
</comment>
<comment type="induction">
    <text evidence="2 3 5">Expression is positively regulated by the cluster-specific transcription factor FGM4 and is induced during infection of coleoptiles of wheat seedlings (PubMed:23266949, PubMed:25333987). The fusaoctaxin A gene cluster is silenced by H3K27 trimethylation by the histone methyltransferase KMT6 (PubMed:31100892).</text>
</comment>
<comment type="disruption phenotype">
    <text evidence="4">Produces fewer spikelets with blight symptoms on susceptible wheat cultivars.</text>
</comment>
<comment type="similarity">
    <text evidence="8">Belongs to the class-V pyridoxal-phosphate-dependent aminotransferase family. Csd subfamily.</text>
</comment>
<comment type="sequence caution" evidence="8">
    <conflict type="erroneous gene model prediction">
        <sequence resource="EMBL-CDS" id="SCB64986"/>
    </conflict>
</comment>
<gene>
    <name evidence="7" type="primary">FGM3</name>
    <name type="ORF">FGRAMPH1_01T20965</name>
</gene>
<feature type="chain" id="PRO_0000449948" description="Aminotransferase-like protein FGM3">
    <location>
        <begin position="1"/>
        <end position="402"/>
    </location>
</feature>
<feature type="binding site" evidence="1">
    <location>
        <begin position="137"/>
        <end position="138"/>
    </location>
    <ligand>
        <name>pyridoxal 5'-phosphate</name>
        <dbReference type="ChEBI" id="CHEBI:597326"/>
    </ligand>
</feature>
<feature type="binding site" evidence="1">
    <location>
        <position position="218"/>
    </location>
    <ligand>
        <name>pyridoxal 5'-phosphate</name>
        <dbReference type="ChEBI" id="CHEBI:597326"/>
    </ligand>
</feature>
<feature type="binding site" evidence="1">
    <location>
        <begin position="282"/>
        <end position="283"/>
    </location>
    <ligand>
        <name>pyridoxal 5'-phosphate</name>
        <dbReference type="ChEBI" id="CHEBI:597326"/>
    </ligand>
</feature>
<accession>A0A1C3YKE0</accession>
<accession>I1S2J7</accession>
<dbReference type="EC" id="2.-.-.-" evidence="9"/>
<dbReference type="EMBL" id="HG970334">
    <property type="protein sequence ID" value="SCB64986.1"/>
    <property type="status" value="ALT_SEQ"/>
    <property type="molecule type" value="Genomic_DNA"/>
</dbReference>
<dbReference type="SMR" id="A0A1C3YKE0"/>
<dbReference type="STRING" id="229533.A0A1C3YKE0"/>
<dbReference type="VEuPathDB" id="FungiDB:FGRAMPH1_01G20965"/>
<dbReference type="eggNOG" id="KOG1549">
    <property type="taxonomic scope" value="Eukaryota"/>
</dbReference>
<dbReference type="HOGENOM" id="CLU_003433_2_2_1"/>
<dbReference type="InParanoid" id="A0A1C3YKE0"/>
<dbReference type="PHI-base" id="PHI:9038"/>
<dbReference type="Proteomes" id="UP000070720">
    <property type="component" value="Chromosome 3"/>
</dbReference>
<dbReference type="GO" id="GO:0016740">
    <property type="term" value="F:transferase activity"/>
    <property type="evidence" value="ECO:0007669"/>
    <property type="project" value="UniProtKB-KW"/>
</dbReference>
<dbReference type="Gene3D" id="3.90.1150.10">
    <property type="entry name" value="Aspartate Aminotransferase, domain 1"/>
    <property type="match status" value="1"/>
</dbReference>
<dbReference type="Gene3D" id="3.40.640.10">
    <property type="entry name" value="Type I PLP-dependent aspartate aminotransferase-like (Major domain)"/>
    <property type="match status" value="1"/>
</dbReference>
<dbReference type="InterPro" id="IPR000192">
    <property type="entry name" value="Aminotrans_V_dom"/>
</dbReference>
<dbReference type="InterPro" id="IPR015424">
    <property type="entry name" value="PyrdxlP-dep_Trfase"/>
</dbReference>
<dbReference type="InterPro" id="IPR015421">
    <property type="entry name" value="PyrdxlP-dep_Trfase_major"/>
</dbReference>
<dbReference type="InterPro" id="IPR015422">
    <property type="entry name" value="PyrdxlP-dep_Trfase_small"/>
</dbReference>
<dbReference type="PANTHER" id="PTHR43586">
    <property type="entry name" value="CYSTEINE DESULFURASE"/>
    <property type="match status" value="1"/>
</dbReference>
<dbReference type="PANTHER" id="PTHR43586:SF21">
    <property type="entry name" value="PYRIDOXAL PHOSPHATE (PLP)-DEPENDENT ASPARTATE AMINOTRANSFERASE SUPERFAMILY"/>
    <property type="match status" value="1"/>
</dbReference>
<dbReference type="Pfam" id="PF00266">
    <property type="entry name" value="Aminotran_5"/>
    <property type="match status" value="1"/>
</dbReference>
<dbReference type="SUPFAM" id="SSF53383">
    <property type="entry name" value="PLP-dependent transferases"/>
    <property type="match status" value="1"/>
</dbReference>
<reference key="1">
    <citation type="journal article" date="2007" name="Science">
        <title>The Fusarium graminearum genome reveals a link between localized polymorphism and pathogen specialization.</title>
        <authorList>
            <person name="Cuomo C.A."/>
            <person name="Gueldener U."/>
            <person name="Xu J.-R."/>
            <person name="Trail F."/>
            <person name="Turgeon B.G."/>
            <person name="Di Pietro A."/>
            <person name="Walton J.D."/>
            <person name="Ma L.-J."/>
            <person name="Baker S.E."/>
            <person name="Rep M."/>
            <person name="Adam G."/>
            <person name="Antoniw J."/>
            <person name="Baldwin T."/>
            <person name="Calvo S.E."/>
            <person name="Chang Y.-L."/>
            <person name="DeCaprio D."/>
            <person name="Gale L.R."/>
            <person name="Gnerre S."/>
            <person name="Goswami R.S."/>
            <person name="Hammond-Kosack K."/>
            <person name="Harris L.J."/>
            <person name="Hilburn K."/>
            <person name="Kennell J.C."/>
            <person name="Kroken S."/>
            <person name="Magnuson J.K."/>
            <person name="Mannhaupt G."/>
            <person name="Mauceli E.W."/>
            <person name="Mewes H.-W."/>
            <person name="Mitterbauer R."/>
            <person name="Muehlbauer G."/>
            <person name="Muensterkoetter M."/>
            <person name="Nelson D."/>
            <person name="O'Donnell K."/>
            <person name="Ouellet T."/>
            <person name="Qi W."/>
            <person name="Quesneville H."/>
            <person name="Roncero M.I.G."/>
            <person name="Seong K.-Y."/>
            <person name="Tetko I.V."/>
            <person name="Urban M."/>
            <person name="Waalwijk C."/>
            <person name="Ward T.J."/>
            <person name="Yao J."/>
            <person name="Birren B.W."/>
            <person name="Kistler H.C."/>
        </authorList>
    </citation>
    <scope>NUCLEOTIDE SEQUENCE [LARGE SCALE GENOMIC DNA]</scope>
    <source>
        <strain>ATCC MYA-4620 / CBS 123657 / FGSC 9075 / NRRL 31084 / PH-1</strain>
    </source>
</reference>
<reference key="2">
    <citation type="journal article" date="2010" name="Nature">
        <title>Comparative genomics reveals mobile pathogenicity chromosomes in Fusarium.</title>
        <authorList>
            <person name="Ma L.-J."/>
            <person name="van der Does H.C."/>
            <person name="Borkovich K.A."/>
            <person name="Coleman J.J."/>
            <person name="Daboussi M.-J."/>
            <person name="Di Pietro A."/>
            <person name="Dufresne M."/>
            <person name="Freitag M."/>
            <person name="Grabherr M."/>
            <person name="Henrissat B."/>
            <person name="Houterman P.M."/>
            <person name="Kang S."/>
            <person name="Shim W.-B."/>
            <person name="Woloshuk C."/>
            <person name="Xie X."/>
            <person name="Xu J.-R."/>
            <person name="Antoniw J."/>
            <person name="Baker S.E."/>
            <person name="Bluhm B.H."/>
            <person name="Breakspear A."/>
            <person name="Brown D.W."/>
            <person name="Butchko R.A.E."/>
            <person name="Chapman S."/>
            <person name="Coulson R."/>
            <person name="Coutinho P.M."/>
            <person name="Danchin E.G.J."/>
            <person name="Diener A."/>
            <person name="Gale L.R."/>
            <person name="Gardiner D.M."/>
            <person name="Goff S."/>
            <person name="Hammond-Kosack K.E."/>
            <person name="Hilburn K."/>
            <person name="Hua-Van A."/>
            <person name="Jonkers W."/>
            <person name="Kazan K."/>
            <person name="Kodira C.D."/>
            <person name="Koehrsen M."/>
            <person name="Kumar L."/>
            <person name="Lee Y.-H."/>
            <person name="Li L."/>
            <person name="Manners J.M."/>
            <person name="Miranda-Saavedra D."/>
            <person name="Mukherjee M."/>
            <person name="Park G."/>
            <person name="Park J."/>
            <person name="Park S.-Y."/>
            <person name="Proctor R.H."/>
            <person name="Regev A."/>
            <person name="Ruiz-Roldan M.C."/>
            <person name="Sain D."/>
            <person name="Sakthikumar S."/>
            <person name="Sykes S."/>
            <person name="Schwartz D.C."/>
            <person name="Turgeon B.G."/>
            <person name="Wapinski I."/>
            <person name="Yoder O."/>
            <person name="Young S."/>
            <person name="Zeng Q."/>
            <person name="Zhou S."/>
            <person name="Galagan J."/>
            <person name="Cuomo C.A."/>
            <person name="Kistler H.C."/>
            <person name="Rep M."/>
        </authorList>
    </citation>
    <scope>GENOME REANNOTATION</scope>
    <source>
        <strain>ATCC MYA-4620 / CBS 123657 / FGSC 9075 / NRRL 31084 / PH-1</strain>
    </source>
</reference>
<reference key="3">
    <citation type="journal article" date="2015" name="BMC Genomics">
        <title>The completed genome sequence of the pathogenic ascomycete fungus Fusarium graminearum.</title>
        <authorList>
            <person name="King R."/>
            <person name="Urban M."/>
            <person name="Hammond-Kosack M.C.U."/>
            <person name="Hassani-Pak K."/>
            <person name="Hammond-Kosack K.E."/>
        </authorList>
    </citation>
    <scope>NUCLEOTIDE SEQUENCE [LARGE SCALE GENOMIC DNA]</scope>
    <source>
        <strain>ATCC MYA-4620 / CBS 123657 / FGSC 9075 / NRRL 31084 / PH-1</strain>
    </source>
</reference>
<reference key="4">
    <citation type="submission" date="2017-01" db="UniProtKB">
        <authorList>
            <consortium name="EnsemblFungi"/>
        </authorList>
    </citation>
    <scope>IDENTIFICATION</scope>
    <source>
        <strain>ATCC MYA-4620 / CBS 123657 / FGSC 9075 / NRRL 31084 / PH-1</strain>
    </source>
</reference>
<reference key="5">
    <citation type="journal article" date="2012" name="Plant Cell">
        <title>In planta stage-specific fungal gene profiling elucidates the molecular strategies of Fusarium graminearum growing inside wheat coleoptiles.</title>
        <authorList>
            <person name="Zhang X.W."/>
            <person name="Jia L.J."/>
            <person name="Zhang Y."/>
            <person name="Jiang G."/>
            <person name="Li X."/>
            <person name="Zhang D."/>
            <person name="Tang W.H."/>
        </authorList>
    </citation>
    <scope>INDUCTION</scope>
</reference>
<reference key="6">
    <citation type="journal article" date="2014" name="PLoS ONE">
        <title>The Fusarium graminearum genome reveals more secondary metabolite gene clusters and hints of horizontal gene transfer.</title>
        <authorList>
            <person name="Sieber C.M."/>
            <person name="Lee W."/>
            <person name="Wong P."/>
            <person name="Muensterkoetter M."/>
            <person name="Mewes H.W."/>
            <person name="Schmeitzl C."/>
            <person name="Varga E."/>
            <person name="Berthiller F."/>
            <person name="Adam G."/>
            <person name="Gueldener U."/>
        </authorList>
    </citation>
    <scope>IDENTIFICATION</scope>
    <scope>INDUCTION</scope>
</reference>
<reference key="7">
    <citation type="journal article" date="2019" name="Nat. Commun.">
        <title>A linear nonribosomal octapeptide from Fusarium graminearum facilitates cell-to-cell invasion of wheat.</title>
        <authorList>
            <person name="Jia L.J."/>
            <person name="Tang H.Y."/>
            <person name="Wang W.Q."/>
            <person name="Yuan T.L."/>
            <person name="Wei W.Q."/>
            <person name="Pang B."/>
            <person name="Gong X.M."/>
            <person name="Wang S.F."/>
            <person name="Li Y.J."/>
            <person name="Zhang D."/>
            <person name="Liu W."/>
            <person name="Tang W.H."/>
        </authorList>
    </citation>
    <scope>FUNCTION</scope>
    <scope>DISRUPTION PHENOTYPE</scope>
</reference>
<reference key="8">
    <citation type="journal article" date="2019" name="Toxins">
        <title>Fusaoctaxin A, an example of a two-step mechanism for non-ribosomal peptide assembly and maturation in fungi.</title>
        <authorList>
            <person name="Westphal K.R."/>
            <person name="Nielsen K.A.H."/>
            <person name="Wollenberg R.D."/>
            <person name="Moellehoej M.B."/>
            <person name="Bachleitner S."/>
            <person name="Studt L."/>
            <person name="Lysoee E."/>
            <person name="Giese H."/>
            <person name="Wimmer R."/>
            <person name="Soerensen J.L."/>
            <person name="Sondergaard T.E."/>
        </authorList>
    </citation>
    <scope>FUNCTION</scope>
    <scope>INDUCTION</scope>
</reference>